<gene>
    <name evidence="1" type="primary">acdS</name>
</gene>
<comment type="function">
    <text evidence="1">Catalyzes a cyclopropane ring-opening reaction, the irreversible conversion of 1-aminocyclopropane-1-carboxylate (ACC) to ammonia and alpha-ketobutyrate. Allows growth on ACC as a nitrogen source.</text>
</comment>
<comment type="catalytic activity">
    <reaction evidence="1">
        <text>1-aminocyclopropane-1-carboxylate + H2O = 2-oxobutanoate + NH4(+)</text>
        <dbReference type="Rhea" id="RHEA:16933"/>
        <dbReference type="ChEBI" id="CHEBI:15377"/>
        <dbReference type="ChEBI" id="CHEBI:16763"/>
        <dbReference type="ChEBI" id="CHEBI:28938"/>
        <dbReference type="ChEBI" id="CHEBI:58360"/>
        <dbReference type="EC" id="3.5.99.7"/>
    </reaction>
</comment>
<comment type="cofactor">
    <cofactor evidence="1">
        <name>pyridoxal 5'-phosphate</name>
        <dbReference type="ChEBI" id="CHEBI:597326"/>
    </cofactor>
</comment>
<comment type="subunit">
    <text evidence="1">Homotrimer.</text>
</comment>
<comment type="similarity">
    <text evidence="1">Belongs to the ACC deaminase/D-cysteine desulfhydrase family.</text>
</comment>
<keyword id="KW-0378">Hydrolase</keyword>
<keyword id="KW-0663">Pyridoxal phosphate</keyword>
<name>1A1D_VARPD</name>
<protein>
    <recommendedName>
        <fullName evidence="1">1-aminocyclopropane-1-carboxylate deaminase</fullName>
        <shortName evidence="1">ACC deaminase</shortName>
        <shortName evidence="1">ACCD</shortName>
        <ecNumber evidence="1">3.5.99.7</ecNumber>
    </recommendedName>
</protein>
<accession>Q6J256</accession>
<reference key="1">
    <citation type="submission" date="2004-11" db="EMBL/GenBank/DDBJ databases">
        <title>Rapid molecular screening of soil bacteria for 1-aminocyclopropane-1-carboxylate (ACC) deaminase genes.</title>
        <authorList>
            <person name="Hontzeas N."/>
            <person name="Belimov A."/>
            <person name="Safronova V."/>
            <person name="Glick B.R."/>
        </authorList>
    </citation>
    <scope>NUCLEOTIDE SEQUENCE [GENOMIC DNA]</scope>
    <source>
        <strain>5C2</strain>
    </source>
</reference>
<dbReference type="EC" id="3.5.99.7" evidence="1"/>
<dbReference type="EMBL" id="AY604531">
    <property type="protein sequence ID" value="AAT35829.2"/>
    <property type="molecule type" value="Genomic_DNA"/>
</dbReference>
<dbReference type="SMR" id="Q6J256"/>
<dbReference type="eggNOG" id="COG2515">
    <property type="taxonomic scope" value="Bacteria"/>
</dbReference>
<dbReference type="GO" id="GO:0008660">
    <property type="term" value="F:1-aminocyclopropane-1-carboxylate deaminase activity"/>
    <property type="evidence" value="ECO:0007669"/>
    <property type="project" value="UniProtKB-UniRule"/>
</dbReference>
<dbReference type="GO" id="GO:0019148">
    <property type="term" value="F:D-cysteine desulfhydrase activity"/>
    <property type="evidence" value="ECO:0007669"/>
    <property type="project" value="TreeGrafter"/>
</dbReference>
<dbReference type="GO" id="GO:0030170">
    <property type="term" value="F:pyridoxal phosphate binding"/>
    <property type="evidence" value="ECO:0007669"/>
    <property type="project" value="InterPro"/>
</dbReference>
<dbReference type="GO" id="GO:0018871">
    <property type="term" value="P:1-aminocyclopropane-1-carboxylate metabolic process"/>
    <property type="evidence" value="ECO:0007669"/>
    <property type="project" value="UniProtKB-UniRule"/>
</dbReference>
<dbReference type="GO" id="GO:0009310">
    <property type="term" value="P:amine catabolic process"/>
    <property type="evidence" value="ECO:0007669"/>
    <property type="project" value="InterPro"/>
</dbReference>
<dbReference type="CDD" id="cd06449">
    <property type="entry name" value="ACCD"/>
    <property type="match status" value="1"/>
</dbReference>
<dbReference type="FunFam" id="3.40.50.1100:FF:000048">
    <property type="entry name" value="1-aminocyclopropane-1-carboxylate deaminase"/>
    <property type="match status" value="1"/>
</dbReference>
<dbReference type="Gene3D" id="3.40.50.1100">
    <property type="match status" value="2"/>
</dbReference>
<dbReference type="HAMAP" id="MF_00807">
    <property type="entry name" value="ACC_deaminase"/>
    <property type="match status" value="1"/>
</dbReference>
<dbReference type="InterPro" id="IPR027278">
    <property type="entry name" value="ACCD_DCysDesulf"/>
</dbReference>
<dbReference type="InterPro" id="IPR005965">
    <property type="entry name" value="ACP_carboxylate_deaminase"/>
</dbReference>
<dbReference type="InterPro" id="IPR020601">
    <property type="entry name" value="ACP_carboxylate_deaminase_bac"/>
</dbReference>
<dbReference type="InterPro" id="IPR001926">
    <property type="entry name" value="TrpB-like_PALP"/>
</dbReference>
<dbReference type="InterPro" id="IPR036052">
    <property type="entry name" value="TrpB-like_PALP_sf"/>
</dbReference>
<dbReference type="NCBIfam" id="TIGR01274">
    <property type="entry name" value="ACC_deam"/>
    <property type="match status" value="1"/>
</dbReference>
<dbReference type="PANTHER" id="PTHR43780">
    <property type="entry name" value="1-AMINOCYCLOPROPANE-1-CARBOXYLATE DEAMINASE-RELATED"/>
    <property type="match status" value="1"/>
</dbReference>
<dbReference type="PANTHER" id="PTHR43780:SF2">
    <property type="entry name" value="1-AMINOCYCLOPROPANE-1-CARBOXYLATE DEAMINASE-RELATED"/>
    <property type="match status" value="1"/>
</dbReference>
<dbReference type="Pfam" id="PF00291">
    <property type="entry name" value="PALP"/>
    <property type="match status" value="1"/>
</dbReference>
<dbReference type="PIRSF" id="PIRSF006278">
    <property type="entry name" value="ACCD_DCysDesulf"/>
    <property type="match status" value="1"/>
</dbReference>
<dbReference type="SUPFAM" id="SSF53686">
    <property type="entry name" value="Tryptophan synthase beta subunit-like PLP-dependent enzymes"/>
    <property type="match status" value="1"/>
</dbReference>
<evidence type="ECO:0000255" key="1">
    <source>
        <dbReference type="HAMAP-Rule" id="MF_00807"/>
    </source>
</evidence>
<proteinExistence type="inferred from homology"/>
<sequence length="338" mass="36592">MNLKKFPRHVLTFGPTPIQPLKRLSAHLGGKVDLYAKREDCNSGLAFGGNKTRKLEYLIPEALEGGYDTLVSIGGIQSNQTRQVAAVAAHLGLKCVLVQENWVNYSDAVYDRVGNIEMSRIMGADVRLDAAGFDIGIRQSWEQAMADVRAAGGKPFPIPAGCSEHPRGGLGSVGFAEEVRQQEAELGFKFDYLVVCSVTGSTQAGMVVGFAADGRADRVIGIDASAKPQQTFEQILRIAKNTAELVELGRDITEKDVVLDRRFGGPEYGLPNEGTLEAIRLSARFEGMLTDPVYEGKSMHGMIEKVRLGEFPAGSKVLYAHLGGVPALNAYSFLFRNG</sequence>
<feature type="chain" id="PRO_0000184509" description="1-aminocyclopropane-1-carboxylate deaminase">
    <location>
        <begin position="1"/>
        <end position="338"/>
    </location>
</feature>
<feature type="active site" description="Nucleophile" evidence="1">
    <location>
        <position position="78"/>
    </location>
</feature>
<feature type="modified residue" description="N6-(pyridoxal phosphate)lysine" evidence="1">
    <location>
        <position position="51"/>
    </location>
</feature>
<organism>
    <name type="scientific">Variovorax paradoxus</name>
    <dbReference type="NCBI Taxonomy" id="34073"/>
    <lineage>
        <taxon>Bacteria</taxon>
        <taxon>Pseudomonadati</taxon>
        <taxon>Pseudomonadota</taxon>
        <taxon>Betaproteobacteria</taxon>
        <taxon>Burkholderiales</taxon>
        <taxon>Comamonadaceae</taxon>
        <taxon>Variovorax</taxon>
    </lineage>
</organism>